<name>Y399_STAAS</name>
<sequence length="260" mass="29902">MGYLKGFALYISILILIVFIAGCGKSDKTKEDSKEAQIKKSFEKTLDMYPIKNLEDLYDKEGYRDGEFKKGDKGTWTLLTSFAKSNKPGEIDDEGMVLFLNRNIKKATGYYYTSKVHDEFNEKEHQKKYHVELKNNKIVLLDNVEDSKLKNKIENFKFFSQYADFRDFKNYKNGNISSADNVPSFDAEYQISNTDKNVKKLREVYPITTKKSPVLKLHIDGDIKGSSIGYKNIEFNFSKVKDEETAVRDFVNFGPSDGVS</sequence>
<feature type="signal peptide" evidence="1">
    <location>
        <begin position="1"/>
        <end position="22"/>
    </location>
</feature>
<feature type="chain" id="PRO_0000282166" description="Uncharacterized lipoprotein SAS0399">
    <location>
        <begin position="23"/>
        <end position="260"/>
    </location>
</feature>
<feature type="lipid moiety-binding region" description="N-palmitoyl cysteine" evidence="1">
    <location>
        <position position="23"/>
    </location>
</feature>
<feature type="lipid moiety-binding region" description="S-diacylglycerol cysteine" evidence="1">
    <location>
        <position position="23"/>
    </location>
</feature>
<evidence type="ECO:0000255" key="1">
    <source>
        <dbReference type="PROSITE-ProRule" id="PRU00303"/>
    </source>
</evidence>
<evidence type="ECO:0000305" key="2"/>
<keyword id="KW-1003">Cell membrane</keyword>
<keyword id="KW-0449">Lipoprotein</keyword>
<keyword id="KW-0472">Membrane</keyword>
<keyword id="KW-0564">Palmitate</keyword>
<keyword id="KW-0732">Signal</keyword>
<gene>
    <name type="ordered locus">SAS0399</name>
</gene>
<reference key="1">
    <citation type="journal article" date="2004" name="Proc. Natl. Acad. Sci. U.S.A.">
        <title>Complete genomes of two clinical Staphylococcus aureus strains: evidence for the rapid evolution of virulence and drug resistance.</title>
        <authorList>
            <person name="Holden M.T.G."/>
            <person name="Feil E.J."/>
            <person name="Lindsay J.A."/>
            <person name="Peacock S.J."/>
            <person name="Day N.P.J."/>
            <person name="Enright M.C."/>
            <person name="Foster T.J."/>
            <person name="Moore C.E."/>
            <person name="Hurst L."/>
            <person name="Atkin R."/>
            <person name="Barron A."/>
            <person name="Bason N."/>
            <person name="Bentley S.D."/>
            <person name="Chillingworth C."/>
            <person name="Chillingworth T."/>
            <person name="Churcher C."/>
            <person name="Clark L."/>
            <person name="Corton C."/>
            <person name="Cronin A."/>
            <person name="Doggett J."/>
            <person name="Dowd L."/>
            <person name="Feltwell T."/>
            <person name="Hance Z."/>
            <person name="Harris B."/>
            <person name="Hauser H."/>
            <person name="Holroyd S."/>
            <person name="Jagels K."/>
            <person name="James K.D."/>
            <person name="Lennard N."/>
            <person name="Line A."/>
            <person name="Mayes R."/>
            <person name="Moule S."/>
            <person name="Mungall K."/>
            <person name="Ormond D."/>
            <person name="Quail M.A."/>
            <person name="Rabbinowitsch E."/>
            <person name="Rutherford K.M."/>
            <person name="Sanders M."/>
            <person name="Sharp S."/>
            <person name="Simmonds M."/>
            <person name="Stevens K."/>
            <person name="Whitehead S."/>
            <person name="Barrell B.G."/>
            <person name="Spratt B.G."/>
            <person name="Parkhill J."/>
        </authorList>
    </citation>
    <scope>NUCLEOTIDE SEQUENCE [LARGE SCALE GENOMIC DNA]</scope>
    <source>
        <strain>MSSA476</strain>
    </source>
</reference>
<proteinExistence type="inferred from homology"/>
<comment type="subcellular location">
    <subcellularLocation>
        <location evidence="1">Cell membrane</location>
        <topology evidence="1">Lipid-anchor</topology>
    </subcellularLocation>
</comment>
<comment type="similarity">
    <text evidence="2">Belongs to the staphylococcal tandem lipoprotein family.</text>
</comment>
<comment type="sequence caution" evidence="2">
    <conflict type="erroneous initiation">
        <sequence resource="EMBL-CDS" id="CAG42172"/>
    </conflict>
</comment>
<accession>Q6GC48</accession>
<organism>
    <name type="scientific">Staphylococcus aureus (strain MSSA476)</name>
    <dbReference type="NCBI Taxonomy" id="282459"/>
    <lineage>
        <taxon>Bacteria</taxon>
        <taxon>Bacillati</taxon>
        <taxon>Bacillota</taxon>
        <taxon>Bacilli</taxon>
        <taxon>Bacillales</taxon>
        <taxon>Staphylococcaceae</taxon>
        <taxon>Staphylococcus</taxon>
    </lineage>
</organism>
<dbReference type="EMBL" id="BX571857">
    <property type="protein sequence ID" value="CAG42172.1"/>
    <property type="status" value="ALT_INIT"/>
    <property type="molecule type" value="Genomic_DNA"/>
</dbReference>
<dbReference type="RefSeq" id="WP_001826822.1">
    <property type="nucleotide sequence ID" value="NC_002953.3"/>
</dbReference>
<dbReference type="SMR" id="Q6GC48"/>
<dbReference type="KEGG" id="sas:SAS0399"/>
<dbReference type="HOGENOM" id="CLU_071589_0_1_9"/>
<dbReference type="GO" id="GO:0005886">
    <property type="term" value="C:plasma membrane"/>
    <property type="evidence" value="ECO:0007669"/>
    <property type="project" value="UniProtKB-SubCell"/>
</dbReference>
<dbReference type="Gene3D" id="2.50.20.40">
    <property type="match status" value="1"/>
</dbReference>
<dbReference type="InterPro" id="IPR007595">
    <property type="entry name" value="Csa"/>
</dbReference>
<dbReference type="InterPro" id="IPR038641">
    <property type="entry name" value="Csa_sf"/>
</dbReference>
<dbReference type="NCBIfam" id="TIGR01742">
    <property type="entry name" value="SA_tandem_lipo"/>
    <property type="match status" value="1"/>
</dbReference>
<dbReference type="Pfam" id="PF04507">
    <property type="entry name" value="DUF576"/>
    <property type="match status" value="1"/>
</dbReference>
<dbReference type="PROSITE" id="PS51257">
    <property type="entry name" value="PROKAR_LIPOPROTEIN"/>
    <property type="match status" value="1"/>
</dbReference>
<protein>
    <recommendedName>
        <fullName>Uncharacterized lipoprotein SAS0399</fullName>
    </recommendedName>
</protein>